<organism>
    <name type="scientific">Cellvibrio japonicus (strain Ueda107)</name>
    <name type="common">Pseudomonas fluorescens subsp. cellulosa</name>
    <dbReference type="NCBI Taxonomy" id="498211"/>
    <lineage>
        <taxon>Bacteria</taxon>
        <taxon>Pseudomonadati</taxon>
        <taxon>Pseudomonadota</taxon>
        <taxon>Gammaproteobacteria</taxon>
        <taxon>Cellvibrionales</taxon>
        <taxon>Cellvibrionaceae</taxon>
        <taxon>Cellvibrio</taxon>
    </lineage>
</organism>
<evidence type="ECO:0000255" key="1">
    <source>
        <dbReference type="HAMAP-Rule" id="MF_00373"/>
    </source>
</evidence>
<evidence type="ECO:0000256" key="2">
    <source>
        <dbReference type="SAM" id="MobiDB-lite"/>
    </source>
</evidence>
<evidence type="ECO:0000305" key="3"/>
<keyword id="KW-1185">Reference proteome</keyword>
<keyword id="KW-0687">Ribonucleoprotein</keyword>
<keyword id="KW-0689">Ribosomal protein</keyword>
<name>RL28_CELJU</name>
<protein>
    <recommendedName>
        <fullName evidence="1">Large ribosomal subunit protein bL28</fullName>
    </recommendedName>
    <alternativeName>
        <fullName evidence="3">50S ribosomal protein L28</fullName>
    </alternativeName>
</protein>
<comment type="similarity">
    <text evidence="1">Belongs to the bacterial ribosomal protein bL28 family.</text>
</comment>
<reference key="1">
    <citation type="journal article" date="2008" name="J. Bacteriol.">
        <title>Insights into plant cell wall degradation from the genome sequence of the soil bacterium Cellvibrio japonicus.</title>
        <authorList>
            <person name="DeBoy R.T."/>
            <person name="Mongodin E.F."/>
            <person name="Fouts D.E."/>
            <person name="Tailford L.E."/>
            <person name="Khouri H."/>
            <person name="Emerson J.B."/>
            <person name="Mohamoud Y."/>
            <person name="Watkins K."/>
            <person name="Henrissat B."/>
            <person name="Gilbert H.J."/>
            <person name="Nelson K.E."/>
        </authorList>
    </citation>
    <scope>NUCLEOTIDE SEQUENCE [LARGE SCALE GENOMIC DNA]</scope>
    <source>
        <strain>Ueda107</strain>
    </source>
</reference>
<dbReference type="EMBL" id="CP000934">
    <property type="protein sequence ID" value="ACE85744.1"/>
    <property type="molecule type" value="Genomic_DNA"/>
</dbReference>
<dbReference type="RefSeq" id="WP_012489090.1">
    <property type="nucleotide sequence ID" value="NC_010995.1"/>
</dbReference>
<dbReference type="SMR" id="B3PG61"/>
<dbReference type="STRING" id="498211.CJA_3515"/>
<dbReference type="KEGG" id="cja:CJA_3515"/>
<dbReference type="eggNOG" id="COG0227">
    <property type="taxonomic scope" value="Bacteria"/>
</dbReference>
<dbReference type="HOGENOM" id="CLU_064548_3_1_6"/>
<dbReference type="OrthoDB" id="9805609at2"/>
<dbReference type="Proteomes" id="UP000001036">
    <property type="component" value="Chromosome"/>
</dbReference>
<dbReference type="GO" id="GO:0022625">
    <property type="term" value="C:cytosolic large ribosomal subunit"/>
    <property type="evidence" value="ECO:0007669"/>
    <property type="project" value="TreeGrafter"/>
</dbReference>
<dbReference type="GO" id="GO:0003735">
    <property type="term" value="F:structural constituent of ribosome"/>
    <property type="evidence" value="ECO:0007669"/>
    <property type="project" value="InterPro"/>
</dbReference>
<dbReference type="GO" id="GO:0006412">
    <property type="term" value="P:translation"/>
    <property type="evidence" value="ECO:0007669"/>
    <property type="project" value="UniProtKB-UniRule"/>
</dbReference>
<dbReference type="FunFam" id="2.30.170.40:FF:000001">
    <property type="entry name" value="50S ribosomal protein L28"/>
    <property type="match status" value="1"/>
</dbReference>
<dbReference type="Gene3D" id="2.30.170.40">
    <property type="entry name" value="Ribosomal protein L28/L24"/>
    <property type="match status" value="1"/>
</dbReference>
<dbReference type="HAMAP" id="MF_00373">
    <property type="entry name" value="Ribosomal_bL28"/>
    <property type="match status" value="1"/>
</dbReference>
<dbReference type="InterPro" id="IPR026569">
    <property type="entry name" value="Ribosomal_bL28"/>
</dbReference>
<dbReference type="InterPro" id="IPR034704">
    <property type="entry name" value="Ribosomal_bL28/bL31-like_sf"/>
</dbReference>
<dbReference type="InterPro" id="IPR001383">
    <property type="entry name" value="Ribosomal_bL28_bact-type"/>
</dbReference>
<dbReference type="InterPro" id="IPR037147">
    <property type="entry name" value="Ribosomal_bL28_sf"/>
</dbReference>
<dbReference type="NCBIfam" id="TIGR00009">
    <property type="entry name" value="L28"/>
    <property type="match status" value="1"/>
</dbReference>
<dbReference type="PANTHER" id="PTHR13528">
    <property type="entry name" value="39S RIBOSOMAL PROTEIN L28, MITOCHONDRIAL"/>
    <property type="match status" value="1"/>
</dbReference>
<dbReference type="PANTHER" id="PTHR13528:SF2">
    <property type="entry name" value="LARGE RIBOSOMAL SUBUNIT PROTEIN BL28M"/>
    <property type="match status" value="1"/>
</dbReference>
<dbReference type="Pfam" id="PF00830">
    <property type="entry name" value="Ribosomal_L28"/>
    <property type="match status" value="1"/>
</dbReference>
<dbReference type="SUPFAM" id="SSF143800">
    <property type="entry name" value="L28p-like"/>
    <property type="match status" value="1"/>
</dbReference>
<gene>
    <name evidence="1" type="primary">rpmB</name>
    <name type="ordered locus">CJA_3515</name>
</gene>
<accession>B3PG61</accession>
<proteinExistence type="inferred from homology"/>
<sequence length="78" mass="8988">MSKVCQVTGKRPITGHNVSHAKNHTKRRFLPNLQTHRFWVEAEKRFVTLRLTPKGMRIIDKLGIEAVLADIRARGEKV</sequence>
<feature type="chain" id="PRO_1000121600" description="Large ribosomal subunit protein bL28">
    <location>
        <begin position="1"/>
        <end position="78"/>
    </location>
</feature>
<feature type="region of interest" description="Disordered" evidence="2">
    <location>
        <begin position="1"/>
        <end position="21"/>
    </location>
</feature>